<organism>
    <name type="scientific">Vibrio vulnificus (strain CMCP6)</name>
    <dbReference type="NCBI Taxonomy" id="216895"/>
    <lineage>
        <taxon>Bacteria</taxon>
        <taxon>Pseudomonadati</taxon>
        <taxon>Pseudomonadota</taxon>
        <taxon>Gammaproteobacteria</taxon>
        <taxon>Vibrionales</taxon>
        <taxon>Vibrionaceae</taxon>
        <taxon>Vibrio</taxon>
    </lineage>
</organism>
<dbReference type="EMBL" id="AE016795">
    <property type="protein sequence ID" value="AAO11335.1"/>
    <property type="molecule type" value="Genomic_DNA"/>
</dbReference>
<dbReference type="RefSeq" id="WP_011080818.1">
    <property type="nucleotide sequence ID" value="NC_004459.3"/>
</dbReference>
<dbReference type="SMR" id="Q8D8G9"/>
<dbReference type="GeneID" id="93894218"/>
<dbReference type="KEGG" id="vvu:VV1_3008"/>
<dbReference type="HOGENOM" id="CLU_108696_5_1_6"/>
<dbReference type="UniPathway" id="UPA00094"/>
<dbReference type="Proteomes" id="UP000002275">
    <property type="component" value="Chromosome 1"/>
</dbReference>
<dbReference type="GO" id="GO:0005829">
    <property type="term" value="C:cytosol"/>
    <property type="evidence" value="ECO:0007669"/>
    <property type="project" value="TreeGrafter"/>
</dbReference>
<dbReference type="GO" id="GO:0016020">
    <property type="term" value="C:membrane"/>
    <property type="evidence" value="ECO:0007669"/>
    <property type="project" value="GOC"/>
</dbReference>
<dbReference type="GO" id="GO:0000035">
    <property type="term" value="F:acyl binding"/>
    <property type="evidence" value="ECO:0007669"/>
    <property type="project" value="TreeGrafter"/>
</dbReference>
<dbReference type="GO" id="GO:0000036">
    <property type="term" value="F:acyl carrier activity"/>
    <property type="evidence" value="ECO:0007669"/>
    <property type="project" value="UniProtKB-UniRule"/>
</dbReference>
<dbReference type="GO" id="GO:0009245">
    <property type="term" value="P:lipid A biosynthetic process"/>
    <property type="evidence" value="ECO:0007669"/>
    <property type="project" value="TreeGrafter"/>
</dbReference>
<dbReference type="FunFam" id="1.10.1200.10:FF:000001">
    <property type="entry name" value="Acyl carrier protein"/>
    <property type="match status" value="1"/>
</dbReference>
<dbReference type="Gene3D" id="1.10.1200.10">
    <property type="entry name" value="ACP-like"/>
    <property type="match status" value="1"/>
</dbReference>
<dbReference type="HAMAP" id="MF_01217">
    <property type="entry name" value="Acyl_carrier"/>
    <property type="match status" value="1"/>
</dbReference>
<dbReference type="InterPro" id="IPR003231">
    <property type="entry name" value="ACP"/>
</dbReference>
<dbReference type="InterPro" id="IPR036736">
    <property type="entry name" value="ACP-like_sf"/>
</dbReference>
<dbReference type="InterPro" id="IPR009081">
    <property type="entry name" value="PP-bd_ACP"/>
</dbReference>
<dbReference type="InterPro" id="IPR006162">
    <property type="entry name" value="Ppantetheine_attach_site"/>
</dbReference>
<dbReference type="NCBIfam" id="TIGR00517">
    <property type="entry name" value="acyl_carrier"/>
    <property type="match status" value="1"/>
</dbReference>
<dbReference type="NCBIfam" id="NF002148">
    <property type="entry name" value="PRK00982.1-2"/>
    <property type="match status" value="1"/>
</dbReference>
<dbReference type="NCBIfam" id="NF002149">
    <property type="entry name" value="PRK00982.1-3"/>
    <property type="match status" value="1"/>
</dbReference>
<dbReference type="NCBIfam" id="NF002150">
    <property type="entry name" value="PRK00982.1-4"/>
    <property type="match status" value="1"/>
</dbReference>
<dbReference type="NCBIfam" id="NF002151">
    <property type="entry name" value="PRK00982.1-5"/>
    <property type="match status" value="1"/>
</dbReference>
<dbReference type="PANTHER" id="PTHR20863">
    <property type="entry name" value="ACYL CARRIER PROTEIN"/>
    <property type="match status" value="1"/>
</dbReference>
<dbReference type="PANTHER" id="PTHR20863:SF76">
    <property type="entry name" value="CARRIER DOMAIN-CONTAINING PROTEIN"/>
    <property type="match status" value="1"/>
</dbReference>
<dbReference type="Pfam" id="PF00550">
    <property type="entry name" value="PP-binding"/>
    <property type="match status" value="1"/>
</dbReference>
<dbReference type="SUPFAM" id="SSF47336">
    <property type="entry name" value="ACP-like"/>
    <property type="match status" value="1"/>
</dbReference>
<dbReference type="PROSITE" id="PS50075">
    <property type="entry name" value="CARRIER"/>
    <property type="match status" value="1"/>
</dbReference>
<dbReference type="PROSITE" id="PS00012">
    <property type="entry name" value="PHOSPHOPANTETHEINE"/>
    <property type="match status" value="1"/>
</dbReference>
<sequence>MSNLEERVKKIIVEQLGVDESEVKNEASFVDDLGADSLDTVELVMALEEEFDTEIPDEEAEKITTVQAAIDYVTANAQ</sequence>
<evidence type="ECO:0000250" key="1"/>
<evidence type="ECO:0000255" key="2">
    <source>
        <dbReference type="HAMAP-Rule" id="MF_01217"/>
    </source>
</evidence>
<evidence type="ECO:0000255" key="3">
    <source>
        <dbReference type="PROSITE-ProRule" id="PRU00258"/>
    </source>
</evidence>
<accession>Q8D8G9</accession>
<keyword id="KW-0963">Cytoplasm</keyword>
<keyword id="KW-0275">Fatty acid biosynthesis</keyword>
<keyword id="KW-0276">Fatty acid metabolism</keyword>
<keyword id="KW-0444">Lipid biosynthesis</keyword>
<keyword id="KW-0443">Lipid metabolism</keyword>
<keyword id="KW-0596">Phosphopantetheine</keyword>
<keyword id="KW-0597">Phosphoprotein</keyword>
<comment type="function">
    <text evidence="2">Carrier of the growing fatty acid chain in fatty acid biosynthesis.</text>
</comment>
<comment type="pathway">
    <text evidence="2">Lipid metabolism; fatty acid biosynthesis.</text>
</comment>
<comment type="subcellular location">
    <subcellularLocation>
        <location evidence="2">Cytoplasm</location>
    </subcellularLocation>
</comment>
<comment type="PTM">
    <text evidence="2">4'-phosphopantetheine is transferred from CoA to a specific serine of apo-ACP by AcpS. This modification is essential for activity because fatty acids are bound in thioester linkage to the sulfhydryl of the prosthetic group.</text>
</comment>
<comment type="similarity">
    <text evidence="2">Belongs to the acyl carrier protein (ACP) family.</text>
</comment>
<name>ACP_VIBVU</name>
<proteinExistence type="inferred from homology"/>
<gene>
    <name evidence="2" type="primary">acpP</name>
    <name type="ordered locus">VV1_3008</name>
</gene>
<protein>
    <recommendedName>
        <fullName evidence="2">Acyl carrier protein</fullName>
        <shortName evidence="2">ACP</shortName>
    </recommendedName>
</protein>
<reference key="1">
    <citation type="submission" date="2002-12" db="EMBL/GenBank/DDBJ databases">
        <title>Complete genome sequence of Vibrio vulnificus CMCP6.</title>
        <authorList>
            <person name="Rhee J.H."/>
            <person name="Kim S.Y."/>
            <person name="Chung S.S."/>
            <person name="Kim J.J."/>
            <person name="Moon Y.H."/>
            <person name="Jeong H."/>
            <person name="Choy H.E."/>
        </authorList>
    </citation>
    <scope>NUCLEOTIDE SEQUENCE [LARGE SCALE GENOMIC DNA]</scope>
    <source>
        <strain>CMCP6</strain>
    </source>
</reference>
<feature type="initiator methionine" description="Removed" evidence="1">
    <location>
        <position position="1"/>
    </location>
</feature>
<feature type="chain" id="PRO_0000180217" description="Acyl carrier protein">
    <location>
        <begin position="2"/>
        <end position="78"/>
    </location>
</feature>
<feature type="domain" description="Carrier" evidence="3">
    <location>
        <begin position="2"/>
        <end position="77"/>
    </location>
</feature>
<feature type="modified residue" description="O-(pantetheine 4'-phosphoryl)serine" evidence="3">
    <location>
        <position position="37"/>
    </location>
</feature>